<gene>
    <name evidence="6" type="primary">AAE1</name>
    <name evidence="5" type="synonym">AMPBP1</name>
    <name evidence="9" type="ordered locus">At1g20560</name>
    <name evidence="10" type="ORF">F5M15.12</name>
</gene>
<keyword id="KW-0025">Alternative splicing</keyword>
<keyword id="KW-0276">Fatty acid metabolism</keyword>
<keyword id="KW-0436">Ligase</keyword>
<keyword id="KW-0443">Lipid metabolism</keyword>
<keyword id="KW-0576">Peroxisome</keyword>
<keyword id="KW-1185">Reference proteome</keyword>
<comment type="function">
    <text evidence="4">Catalyzes the ligation of CoA on butanoate to produce butanoyl-CoA (PubMed:23300257). Can also use hexanoate, pentanoate and 4-methylpentanoate as substrates with a lower efficiency (PubMed:23300257).</text>
</comment>
<comment type="catalytic activity">
    <reaction evidence="4">
        <text>butanoate + ATP + CoA = butanoyl-CoA + AMP + diphosphate</text>
        <dbReference type="Rhea" id="RHEA:46172"/>
        <dbReference type="ChEBI" id="CHEBI:17968"/>
        <dbReference type="ChEBI" id="CHEBI:30616"/>
        <dbReference type="ChEBI" id="CHEBI:33019"/>
        <dbReference type="ChEBI" id="CHEBI:57287"/>
        <dbReference type="ChEBI" id="CHEBI:57371"/>
        <dbReference type="ChEBI" id="CHEBI:456215"/>
    </reaction>
    <physiologicalReaction direction="left-to-right" evidence="4">
        <dbReference type="Rhea" id="RHEA:46173"/>
    </physiologicalReaction>
</comment>
<comment type="catalytic activity">
    <reaction evidence="4">
        <text>hexanoate + ATP + CoA = hexanoyl-CoA + AMP + diphosphate</text>
        <dbReference type="Rhea" id="RHEA:43740"/>
        <dbReference type="ChEBI" id="CHEBI:17120"/>
        <dbReference type="ChEBI" id="CHEBI:30616"/>
        <dbReference type="ChEBI" id="CHEBI:33019"/>
        <dbReference type="ChEBI" id="CHEBI:57287"/>
        <dbReference type="ChEBI" id="CHEBI:62620"/>
        <dbReference type="ChEBI" id="CHEBI:456215"/>
    </reaction>
    <physiologicalReaction direction="left-to-right" evidence="4">
        <dbReference type="Rhea" id="RHEA:43741"/>
    </physiologicalReaction>
</comment>
<comment type="catalytic activity">
    <reaction evidence="4">
        <text>pentanoate + ATP + CoA = pentanoyl-CoA + AMP + diphosphate</text>
        <dbReference type="Rhea" id="RHEA:46168"/>
        <dbReference type="ChEBI" id="CHEBI:30616"/>
        <dbReference type="ChEBI" id="CHEBI:31011"/>
        <dbReference type="ChEBI" id="CHEBI:33019"/>
        <dbReference type="ChEBI" id="CHEBI:57287"/>
        <dbReference type="ChEBI" id="CHEBI:57389"/>
        <dbReference type="ChEBI" id="CHEBI:456215"/>
    </reaction>
    <physiologicalReaction direction="left-to-right" evidence="4">
        <dbReference type="Rhea" id="RHEA:46169"/>
    </physiologicalReaction>
</comment>
<comment type="catalytic activity">
    <reaction evidence="4">
        <text>4-methylpentanoate + ATP + CoA = 4-methylpentanoyl-CoA + AMP + diphosphate</text>
        <dbReference type="Rhea" id="RHEA:66988"/>
        <dbReference type="ChEBI" id="CHEBI:30616"/>
        <dbReference type="ChEBI" id="CHEBI:33019"/>
        <dbReference type="ChEBI" id="CHEBI:57287"/>
        <dbReference type="ChEBI" id="CHEBI:74904"/>
        <dbReference type="ChEBI" id="CHEBI:131445"/>
        <dbReference type="ChEBI" id="CHEBI:456215"/>
    </reaction>
    <physiologicalReaction direction="left-to-right" evidence="4">
        <dbReference type="Rhea" id="RHEA:66989"/>
    </physiologicalReaction>
</comment>
<comment type="subcellular location">
    <subcellularLocation>
        <location evidence="3">Peroxisome</location>
    </subcellularLocation>
</comment>
<comment type="alternative products">
    <event type="alternative splicing"/>
    <isoform>
        <id>F4HUK6-1</id>
        <name>1</name>
        <sequence type="displayed"/>
    </isoform>
    <text>A number of isoforms are produced. According to EST sequences.</text>
</comment>
<comment type="tissue specificity">
    <text evidence="2">Expressed in roots, leaves, stems, flowers and developing seeds.</text>
</comment>
<comment type="similarity">
    <text evidence="7">Belongs to the ATP-dependent AMP-binding enzyme family.</text>
</comment>
<comment type="sequence caution" evidence="7">
    <conflict type="erroneous gene model prediction">
        <sequence resource="EMBL-CDS" id="AAF79607"/>
    </conflict>
</comment>
<comment type="sequence caution" evidence="7">
    <conflict type="erroneous gene model prediction">
        <sequence resource="EMBL-CDS" id="AAF80642"/>
    </conflict>
</comment>
<protein>
    <recommendedName>
        <fullName evidence="8">Butanoate--CoA ligase AAE1</fullName>
        <ecNumber evidence="4">6.2.1.-</ecNumber>
    </recommendedName>
    <alternativeName>
        <fullName evidence="8">4-methylpentanoate--CoA ligase AAE2</fullName>
        <ecNumber evidence="4">6.2.1.-</ecNumber>
    </alternativeName>
    <alternativeName>
        <fullName evidence="5">AMP-binding protein 1</fullName>
        <shortName evidence="5">AtAMPBP1</shortName>
    </alternativeName>
    <alternativeName>
        <fullName evidence="6">Acyl-activating enzyme 1, peroxisomal</fullName>
    </alternativeName>
    <alternativeName>
        <fullName evidence="8">Hexanoate--CoA ligase CCL3</fullName>
        <ecNumber evidence="4">6.2.1.-</ecNumber>
    </alternativeName>
    <alternativeName>
        <fullName evidence="8">Pentanoate--CoA ligase CCL3</fullName>
        <ecNumber evidence="4">6.2.1.-</ecNumber>
    </alternativeName>
</protein>
<reference key="1">
    <citation type="journal article" date="2000" name="Nature">
        <title>Sequence and analysis of chromosome 1 of the plant Arabidopsis thaliana.</title>
        <authorList>
            <person name="Theologis A."/>
            <person name="Ecker J.R."/>
            <person name="Palm C.J."/>
            <person name="Federspiel N.A."/>
            <person name="Kaul S."/>
            <person name="White O."/>
            <person name="Alonso J."/>
            <person name="Altafi H."/>
            <person name="Araujo R."/>
            <person name="Bowman C.L."/>
            <person name="Brooks S.Y."/>
            <person name="Buehler E."/>
            <person name="Chan A."/>
            <person name="Chao Q."/>
            <person name="Chen H."/>
            <person name="Cheuk R.F."/>
            <person name="Chin C.W."/>
            <person name="Chung M.K."/>
            <person name="Conn L."/>
            <person name="Conway A.B."/>
            <person name="Conway A.R."/>
            <person name="Creasy T.H."/>
            <person name="Dewar K."/>
            <person name="Dunn P."/>
            <person name="Etgu P."/>
            <person name="Feldblyum T.V."/>
            <person name="Feng J.-D."/>
            <person name="Fong B."/>
            <person name="Fujii C.Y."/>
            <person name="Gill J.E."/>
            <person name="Goldsmith A.D."/>
            <person name="Haas B."/>
            <person name="Hansen N.F."/>
            <person name="Hughes B."/>
            <person name="Huizar L."/>
            <person name="Hunter J.L."/>
            <person name="Jenkins J."/>
            <person name="Johnson-Hopson C."/>
            <person name="Khan S."/>
            <person name="Khaykin E."/>
            <person name="Kim C.J."/>
            <person name="Koo H.L."/>
            <person name="Kremenetskaia I."/>
            <person name="Kurtz D.B."/>
            <person name="Kwan A."/>
            <person name="Lam B."/>
            <person name="Langin-Hooper S."/>
            <person name="Lee A."/>
            <person name="Lee J.M."/>
            <person name="Lenz C.A."/>
            <person name="Li J.H."/>
            <person name="Li Y.-P."/>
            <person name="Lin X."/>
            <person name="Liu S.X."/>
            <person name="Liu Z.A."/>
            <person name="Luros J.S."/>
            <person name="Maiti R."/>
            <person name="Marziali A."/>
            <person name="Militscher J."/>
            <person name="Miranda M."/>
            <person name="Nguyen M."/>
            <person name="Nierman W.C."/>
            <person name="Osborne B.I."/>
            <person name="Pai G."/>
            <person name="Peterson J."/>
            <person name="Pham P.K."/>
            <person name="Rizzo M."/>
            <person name="Rooney T."/>
            <person name="Rowley D."/>
            <person name="Sakano H."/>
            <person name="Salzberg S.L."/>
            <person name="Schwartz J.R."/>
            <person name="Shinn P."/>
            <person name="Southwick A.M."/>
            <person name="Sun H."/>
            <person name="Tallon L.J."/>
            <person name="Tambunga G."/>
            <person name="Toriumi M.J."/>
            <person name="Town C.D."/>
            <person name="Utterback T."/>
            <person name="Van Aken S."/>
            <person name="Vaysberg M."/>
            <person name="Vysotskaia V.S."/>
            <person name="Walker M."/>
            <person name="Wu D."/>
            <person name="Yu G."/>
            <person name="Fraser C.M."/>
            <person name="Venter J.C."/>
            <person name="Davis R.W."/>
        </authorList>
    </citation>
    <scope>NUCLEOTIDE SEQUENCE [LARGE SCALE GENOMIC DNA]</scope>
    <source>
        <strain>cv. Columbia</strain>
    </source>
</reference>
<reference key="2">
    <citation type="journal article" date="2017" name="Plant J.">
        <title>Araport11: a complete reannotation of the Arabidopsis thaliana reference genome.</title>
        <authorList>
            <person name="Cheng C.Y."/>
            <person name="Krishnakumar V."/>
            <person name="Chan A.P."/>
            <person name="Thibaud-Nissen F."/>
            <person name="Schobel S."/>
            <person name="Town C.D."/>
        </authorList>
    </citation>
    <scope>GENOME REANNOTATION</scope>
    <source>
        <strain>cv. Columbia</strain>
    </source>
</reference>
<reference key="3">
    <citation type="journal article" date="2003" name="Science">
        <title>Empirical analysis of transcriptional activity in the Arabidopsis genome.</title>
        <authorList>
            <person name="Yamada K."/>
            <person name="Lim J."/>
            <person name="Dale J.M."/>
            <person name="Chen H."/>
            <person name="Shinn P."/>
            <person name="Palm C.J."/>
            <person name="Southwick A.M."/>
            <person name="Wu H.C."/>
            <person name="Kim C.J."/>
            <person name="Nguyen M."/>
            <person name="Pham P.K."/>
            <person name="Cheuk R.F."/>
            <person name="Karlin-Newmann G."/>
            <person name="Liu S.X."/>
            <person name="Lam B."/>
            <person name="Sakano H."/>
            <person name="Wu T."/>
            <person name="Yu G."/>
            <person name="Miranda M."/>
            <person name="Quach H.L."/>
            <person name="Tripp M."/>
            <person name="Chang C.H."/>
            <person name="Lee J.M."/>
            <person name="Toriumi M.J."/>
            <person name="Chan M.M."/>
            <person name="Tang C.C."/>
            <person name="Onodera C.S."/>
            <person name="Deng J.M."/>
            <person name="Akiyama K."/>
            <person name="Ansari Y."/>
            <person name="Arakawa T."/>
            <person name="Banh J."/>
            <person name="Banno F."/>
            <person name="Bowser L."/>
            <person name="Brooks S.Y."/>
            <person name="Carninci P."/>
            <person name="Chao Q."/>
            <person name="Choy N."/>
            <person name="Enju A."/>
            <person name="Goldsmith A.D."/>
            <person name="Gurjal M."/>
            <person name="Hansen N.F."/>
            <person name="Hayashizaki Y."/>
            <person name="Johnson-Hopson C."/>
            <person name="Hsuan V.W."/>
            <person name="Iida K."/>
            <person name="Karnes M."/>
            <person name="Khan S."/>
            <person name="Koesema E."/>
            <person name="Ishida J."/>
            <person name="Jiang P.X."/>
            <person name="Jones T."/>
            <person name="Kawai J."/>
            <person name="Kamiya A."/>
            <person name="Meyers C."/>
            <person name="Nakajima M."/>
            <person name="Narusaka M."/>
            <person name="Seki M."/>
            <person name="Sakurai T."/>
            <person name="Satou M."/>
            <person name="Tamse R."/>
            <person name="Vaysberg M."/>
            <person name="Wallender E.K."/>
            <person name="Wong C."/>
            <person name="Yamamura Y."/>
            <person name="Yuan S."/>
            <person name="Shinozaki K."/>
            <person name="Davis R.W."/>
            <person name="Theologis A."/>
            <person name="Ecker J.R."/>
        </authorList>
    </citation>
    <scope>NUCLEOTIDE SEQUENCE [LARGE SCALE MRNA]</scope>
    <source>
        <strain>cv. Columbia</strain>
    </source>
</reference>
<reference key="4">
    <citation type="journal article" date="2002" name="Plant Physiol.">
        <title>Arabidopsis contains nine long-chain acyl-coenzyme A synthetase genes that participate in fatty acid and glycerolipid metabolism.</title>
        <authorList>
            <person name="Shockey J.M."/>
            <person name="Fulda M.S."/>
            <person name="Browse J.A."/>
        </authorList>
    </citation>
    <scope>NUCLEOTIDE SEQUENCE [MRNA] OF 3-556</scope>
</reference>
<reference key="5">
    <citation type="journal article" date="2003" name="Plant Physiol.">
        <title>Arabidopsis contains a large superfamily of acyl-activating enzymes. Phylogenetic and biochemical analysis reveals a new class of acyl-coenzyme a synthetases.</title>
        <authorList>
            <person name="Shockey J.M."/>
            <person name="Fulda M.S."/>
            <person name="Browse J."/>
        </authorList>
    </citation>
    <scope>TISSUE SPECIFICITY</scope>
    <scope>GENE FAMILY</scope>
    <scope>NOMENCLATURE</scope>
</reference>
<reference key="6">
    <citation type="journal article" date="2009" name="Plant Physiol.">
        <title>In-depth proteome analysis of Arabidopsis leaf peroxisomes combined with in vivo subcellular targeting verification indicates novel metabolic and regulatory functions of peroxisomes.</title>
        <authorList>
            <person name="Reumann S."/>
            <person name="Quan S."/>
            <person name="Aung K."/>
            <person name="Yang P."/>
            <person name="Manandhar-Shrestha K."/>
            <person name="Holbrook D."/>
            <person name="Linka N."/>
            <person name="Switzenberg R."/>
            <person name="Wilkerson C.G."/>
            <person name="Weber A.P."/>
            <person name="Olsen L.J."/>
            <person name="Hu J."/>
        </authorList>
    </citation>
    <scope>SUBCELLULAR LOCATION</scope>
</reference>
<reference key="7">
    <citation type="journal article" date="2013" name="Mol. Plant">
        <title>Characterization of the formation of branched short-chain fatty acid:CoAs for bitter acid biosynthesis in hop glandular trichomes.</title>
        <authorList>
            <person name="Xu H."/>
            <person name="Zhang F."/>
            <person name="Liu B."/>
            <person name="Huhman D.V."/>
            <person name="Sumner L.W."/>
            <person name="Dixon R.A."/>
            <person name="Wang G."/>
        </authorList>
    </citation>
    <scope>FUNCTION</scope>
    <scope>CATALYTIC ACTIVITY</scope>
</reference>
<proteinExistence type="evidence at protein level"/>
<feature type="chain" id="PRO_0000415713" description="Butanoate--CoA ligase AAE1">
    <location>
        <begin position="1"/>
        <end position="556"/>
    </location>
</feature>
<feature type="short sequence motif" description="Microbody targeting signal" evidence="1">
    <location>
        <begin position="554"/>
        <end position="556"/>
    </location>
</feature>
<feature type="sequence conflict" description="In Ref. 3; AAK50082/AAL77740." evidence="7" ref="3">
    <original>E</original>
    <variation>D</variation>
    <location>
        <position position="128"/>
    </location>
</feature>
<sequence length="556" mass="61073">MKMEGTIKSPANYVPLTPISFLDRSAVVYADRVSIVYGSVKYTWRQTRDRCVRIASALSQLGISTGDVVSVLAPNVPAMVELHFGVPMAGALLCTLNIRHDSSLVAVLLRHSGTKVIFADHQFLQIAEGACEILSNKGDKVPILVLIPEPLTQSVSRKKRSEEMMEYEDVVAMGKSDFEVIRPTDECDAISVNYTSGTTSSPKGVVYSHRGAYLNSLAAVLLNEMHSSPTYLWTNPMFHCNGWCLLWGVTAIGGTNICLRNVTAKAIFDNISQHKVTHMGGAPTILNMIINAPESEQKPLPGKVSFITGAAPPPAHVIFKMEELGFSMFHSYGLTETYGPGTICTWKPEWDSLPREEQAKMKARQGVNHLGLEEIQVKDPVTMRTLPADGVTMGEVVFRGNTVMNGYLKNPEATKEAFKGGWFWSGDLGVKHPDGYIELKDRSKDIIISGGENISSIEVESTLFTHPCVLEAAVVARPDEYWGETACAFVKLKDGSKASAEELISYCRDRLPHYMAPRSIVFEDLPKTSTGKVQKFVLRTKAKALVSLSKKGRSKL</sequence>
<dbReference type="EC" id="6.2.1.-" evidence="4"/>
<dbReference type="EMBL" id="AC027665">
    <property type="protein sequence ID" value="AAF79607.1"/>
    <property type="status" value="ALT_SEQ"/>
    <property type="molecule type" value="Genomic_DNA"/>
</dbReference>
<dbReference type="EMBL" id="AC069251">
    <property type="protein sequence ID" value="AAF80642.1"/>
    <property type="status" value="ALT_SEQ"/>
    <property type="molecule type" value="Genomic_DNA"/>
</dbReference>
<dbReference type="EMBL" id="CP002684">
    <property type="protein sequence ID" value="AEE29986.1"/>
    <property type="molecule type" value="Genomic_DNA"/>
</dbReference>
<dbReference type="EMBL" id="AF372942">
    <property type="protein sequence ID" value="AAK50082.1"/>
    <property type="molecule type" value="mRNA"/>
</dbReference>
<dbReference type="EMBL" id="AY078039">
    <property type="protein sequence ID" value="AAL77740.1"/>
    <property type="molecule type" value="mRNA"/>
</dbReference>
<dbReference type="EMBL" id="AF503760">
    <property type="protein sequence ID" value="AAM28618.1"/>
    <property type="molecule type" value="mRNA"/>
</dbReference>
<dbReference type="PIR" id="G86338">
    <property type="entry name" value="G86338"/>
</dbReference>
<dbReference type="RefSeq" id="NP_564116.1">
    <molecule id="F4HUK6-1"/>
    <property type="nucleotide sequence ID" value="NM_101906.4"/>
</dbReference>
<dbReference type="SMR" id="F4HUK6"/>
<dbReference type="FunCoup" id="F4HUK6">
    <property type="interactions" value="1607"/>
</dbReference>
<dbReference type="STRING" id="3702.F4HUK6"/>
<dbReference type="PaxDb" id="3702-AT1G20560.1"/>
<dbReference type="ProteomicsDB" id="245090">
    <molecule id="F4HUK6-1"/>
</dbReference>
<dbReference type="EnsemblPlants" id="AT1G20560.1">
    <molecule id="F4HUK6-1"/>
    <property type="protein sequence ID" value="AT1G20560.1"/>
    <property type="gene ID" value="AT1G20560"/>
</dbReference>
<dbReference type="GeneID" id="838644"/>
<dbReference type="Gramene" id="AT1G20560.1">
    <molecule id="F4HUK6-1"/>
    <property type="protein sequence ID" value="AT1G20560.1"/>
    <property type="gene ID" value="AT1G20560"/>
</dbReference>
<dbReference type="KEGG" id="ath:AT1G20560"/>
<dbReference type="Araport" id="AT1G20560"/>
<dbReference type="TAIR" id="AT1G20560">
    <property type="gene designation" value="AAE1"/>
</dbReference>
<dbReference type="eggNOG" id="KOG1176">
    <property type="taxonomic scope" value="Eukaryota"/>
</dbReference>
<dbReference type="InParanoid" id="F4HUK6"/>
<dbReference type="OMA" id="TNRVECA"/>
<dbReference type="PRO" id="PR:F4HUK6"/>
<dbReference type="Proteomes" id="UP000006548">
    <property type="component" value="Chromosome 1"/>
</dbReference>
<dbReference type="ExpressionAtlas" id="F4HUK6">
    <property type="expression patterns" value="baseline and differential"/>
</dbReference>
<dbReference type="GO" id="GO:0005777">
    <property type="term" value="C:peroxisome"/>
    <property type="evidence" value="ECO:0000314"/>
    <property type="project" value="TAIR"/>
</dbReference>
<dbReference type="GO" id="GO:0016874">
    <property type="term" value="F:ligase activity"/>
    <property type="evidence" value="ECO:0007669"/>
    <property type="project" value="UniProtKB-KW"/>
</dbReference>
<dbReference type="GO" id="GO:0006631">
    <property type="term" value="P:fatty acid metabolic process"/>
    <property type="evidence" value="ECO:0007669"/>
    <property type="project" value="UniProtKB-KW"/>
</dbReference>
<dbReference type="CDD" id="cd12118">
    <property type="entry name" value="ttLC_FACS_AEE21_like"/>
    <property type="match status" value="1"/>
</dbReference>
<dbReference type="FunFam" id="3.30.300.30:FF:000008">
    <property type="entry name" value="2,3-dihydroxybenzoate-AMP ligase"/>
    <property type="match status" value="1"/>
</dbReference>
<dbReference type="FunFam" id="3.40.50.12780:FF:000003">
    <property type="entry name" value="Long-chain-fatty-acid--CoA ligase FadD"/>
    <property type="match status" value="1"/>
</dbReference>
<dbReference type="Gene3D" id="3.30.300.30">
    <property type="match status" value="1"/>
</dbReference>
<dbReference type="Gene3D" id="3.40.50.12780">
    <property type="entry name" value="N-terminal domain of ligase-like"/>
    <property type="match status" value="1"/>
</dbReference>
<dbReference type="InterPro" id="IPR025110">
    <property type="entry name" value="AMP-bd_C"/>
</dbReference>
<dbReference type="InterPro" id="IPR045851">
    <property type="entry name" value="AMP-bd_C_sf"/>
</dbReference>
<dbReference type="InterPro" id="IPR020845">
    <property type="entry name" value="AMP-binding_CS"/>
</dbReference>
<dbReference type="InterPro" id="IPR000873">
    <property type="entry name" value="AMP-dep_synth/lig_dom"/>
</dbReference>
<dbReference type="InterPro" id="IPR042099">
    <property type="entry name" value="ANL_N_sf"/>
</dbReference>
<dbReference type="NCBIfam" id="NF006020">
    <property type="entry name" value="PRK08162.1"/>
    <property type="match status" value="1"/>
</dbReference>
<dbReference type="PANTHER" id="PTHR43859">
    <property type="entry name" value="ACYL-ACTIVATING ENZYME"/>
    <property type="match status" value="1"/>
</dbReference>
<dbReference type="PANTHER" id="PTHR43859:SF4">
    <property type="entry name" value="BUTANOATE--COA LIGASE AAE1-RELATED"/>
    <property type="match status" value="1"/>
</dbReference>
<dbReference type="Pfam" id="PF00501">
    <property type="entry name" value="AMP-binding"/>
    <property type="match status" value="1"/>
</dbReference>
<dbReference type="Pfam" id="PF13193">
    <property type="entry name" value="AMP-binding_C"/>
    <property type="match status" value="1"/>
</dbReference>
<dbReference type="SUPFAM" id="SSF56801">
    <property type="entry name" value="Acetyl-CoA synthetase-like"/>
    <property type="match status" value="1"/>
</dbReference>
<dbReference type="PROSITE" id="PS00455">
    <property type="entry name" value="AMP_BINDING"/>
    <property type="match status" value="1"/>
</dbReference>
<accession>F4HUK6</accession>
<accession>Q8LRT6</accession>
<accession>Q94JT9</accession>
<accession>Q9LM95</accession>
<accession>Q9LMW3</accession>
<name>AAE1_ARATH</name>
<evidence type="ECO:0000255" key="1"/>
<evidence type="ECO:0000269" key="2">
    <source>
    </source>
</evidence>
<evidence type="ECO:0000269" key="3">
    <source>
    </source>
</evidence>
<evidence type="ECO:0000269" key="4">
    <source>
    </source>
</evidence>
<evidence type="ECO:0000303" key="5">
    <source>
    </source>
</evidence>
<evidence type="ECO:0000303" key="6">
    <source>
    </source>
</evidence>
<evidence type="ECO:0000305" key="7"/>
<evidence type="ECO:0000305" key="8">
    <source>
    </source>
</evidence>
<evidence type="ECO:0000312" key="9">
    <source>
        <dbReference type="Araport" id="AT1G20560"/>
    </source>
</evidence>
<evidence type="ECO:0000312" key="10">
    <source>
        <dbReference type="EMBL" id="AAF79607.1"/>
    </source>
</evidence>
<organism>
    <name type="scientific">Arabidopsis thaliana</name>
    <name type="common">Mouse-ear cress</name>
    <dbReference type="NCBI Taxonomy" id="3702"/>
    <lineage>
        <taxon>Eukaryota</taxon>
        <taxon>Viridiplantae</taxon>
        <taxon>Streptophyta</taxon>
        <taxon>Embryophyta</taxon>
        <taxon>Tracheophyta</taxon>
        <taxon>Spermatophyta</taxon>
        <taxon>Magnoliopsida</taxon>
        <taxon>eudicotyledons</taxon>
        <taxon>Gunneridae</taxon>
        <taxon>Pentapetalae</taxon>
        <taxon>rosids</taxon>
        <taxon>malvids</taxon>
        <taxon>Brassicales</taxon>
        <taxon>Brassicaceae</taxon>
        <taxon>Camelineae</taxon>
        <taxon>Arabidopsis</taxon>
    </lineage>
</organism>